<gene>
    <name type="primary">PLT3</name>
    <name type="ordered locus">At2g18480</name>
    <name type="ORF">F24H14.17</name>
</gene>
<keyword id="KW-0472">Membrane</keyword>
<keyword id="KW-1185">Reference proteome</keyword>
<keyword id="KW-0762">Sugar transport</keyword>
<keyword id="KW-0769">Symport</keyword>
<keyword id="KW-0812">Transmembrane</keyword>
<keyword id="KW-1133">Transmembrane helix</keyword>
<keyword id="KW-0813">Transport</keyword>
<proteinExistence type="inferred from homology"/>
<protein>
    <recommendedName>
        <fullName>Probable polyol transporter 3</fullName>
    </recommendedName>
</protein>
<accession>Q9ZNS0</accession>
<reference key="1">
    <citation type="journal article" date="1999" name="Nature">
        <title>Sequence and analysis of chromosome 2 of the plant Arabidopsis thaliana.</title>
        <authorList>
            <person name="Lin X."/>
            <person name="Kaul S."/>
            <person name="Rounsley S.D."/>
            <person name="Shea T.P."/>
            <person name="Benito M.-I."/>
            <person name="Town C.D."/>
            <person name="Fujii C.Y."/>
            <person name="Mason T.M."/>
            <person name="Bowman C.L."/>
            <person name="Barnstead M.E."/>
            <person name="Feldblyum T.V."/>
            <person name="Buell C.R."/>
            <person name="Ketchum K.A."/>
            <person name="Lee J.J."/>
            <person name="Ronning C.M."/>
            <person name="Koo H.L."/>
            <person name="Moffat K.S."/>
            <person name="Cronin L.A."/>
            <person name="Shen M."/>
            <person name="Pai G."/>
            <person name="Van Aken S."/>
            <person name="Umayam L."/>
            <person name="Tallon L.J."/>
            <person name="Gill J.E."/>
            <person name="Adams M.D."/>
            <person name="Carrera A.J."/>
            <person name="Creasy T.H."/>
            <person name="Goodman H.M."/>
            <person name="Somerville C.R."/>
            <person name="Copenhaver G.P."/>
            <person name="Preuss D."/>
            <person name="Nierman W.C."/>
            <person name="White O."/>
            <person name="Eisen J.A."/>
            <person name="Salzberg S.L."/>
            <person name="Fraser C.M."/>
            <person name="Venter J.C."/>
        </authorList>
    </citation>
    <scope>NUCLEOTIDE SEQUENCE [LARGE SCALE GENOMIC DNA]</scope>
    <source>
        <strain>cv. Columbia</strain>
    </source>
</reference>
<reference key="2">
    <citation type="journal article" date="2017" name="Plant J.">
        <title>Araport11: a complete reannotation of the Arabidopsis thaliana reference genome.</title>
        <authorList>
            <person name="Cheng C.Y."/>
            <person name="Krishnakumar V."/>
            <person name="Chan A.P."/>
            <person name="Thibaud-Nissen F."/>
            <person name="Schobel S."/>
            <person name="Town C.D."/>
        </authorList>
    </citation>
    <scope>GENOME REANNOTATION</scope>
    <source>
        <strain>cv. Columbia</strain>
    </source>
</reference>
<reference key="3">
    <citation type="journal article" date="2006" name="BMC Evol. Biol.">
        <title>The monosaccharide transporter gene family in land plants is ancient and shows differential subfamily expression and expansion across lineages.</title>
        <authorList>
            <person name="Johnson D.A."/>
            <person name="Hill J.P."/>
            <person name="Thomas M.A."/>
        </authorList>
    </citation>
    <scope>GENE FAMILY</scope>
</reference>
<evidence type="ECO:0000250" key="1"/>
<evidence type="ECO:0000255" key="2"/>
<evidence type="ECO:0000305" key="3"/>
<feature type="chain" id="PRO_0000259871" description="Probable polyol transporter 3">
    <location>
        <begin position="1"/>
        <end position="508"/>
    </location>
</feature>
<feature type="transmembrane region" description="Helical; Name=1" evidence="2">
    <location>
        <begin position="21"/>
        <end position="41"/>
    </location>
</feature>
<feature type="transmembrane region" description="Helical; Name=2" evidence="2">
    <location>
        <begin position="60"/>
        <end position="80"/>
    </location>
</feature>
<feature type="transmembrane region" description="Helical; Name=3" evidence="2">
    <location>
        <begin position="90"/>
        <end position="110"/>
    </location>
</feature>
<feature type="transmembrane region" description="Helical; Name=4" evidence="2">
    <location>
        <begin position="120"/>
        <end position="140"/>
    </location>
</feature>
<feature type="transmembrane region" description="Helical; Name=5" evidence="2">
    <location>
        <begin position="147"/>
        <end position="167"/>
    </location>
</feature>
<feature type="transmembrane region" description="Helical; Name=6" evidence="2">
    <location>
        <begin position="178"/>
        <end position="198"/>
    </location>
</feature>
<feature type="transmembrane region" description="Helical; Name=7" evidence="2">
    <location>
        <begin position="280"/>
        <end position="300"/>
    </location>
</feature>
<feature type="transmembrane region" description="Helical; Name=8" evidence="2">
    <location>
        <begin position="318"/>
        <end position="338"/>
    </location>
</feature>
<feature type="transmembrane region" description="Helical; Name=9" evidence="2">
    <location>
        <begin position="348"/>
        <end position="368"/>
    </location>
</feature>
<feature type="transmembrane region" description="Helical; Name=10" evidence="2">
    <location>
        <begin position="384"/>
        <end position="404"/>
    </location>
</feature>
<feature type="transmembrane region" description="Helical; Name=11" evidence="2">
    <location>
        <begin position="418"/>
        <end position="438"/>
    </location>
</feature>
<feature type="transmembrane region" description="Helical; Name=12" evidence="2">
    <location>
        <begin position="448"/>
        <end position="468"/>
    </location>
</feature>
<comment type="function">
    <text evidence="1">Plasma membrane sugar-proton symporter.</text>
</comment>
<comment type="subcellular location">
    <subcellularLocation>
        <location evidence="1">Membrane</location>
        <topology evidence="1">Multi-pass membrane protein</topology>
    </subcellularLocation>
</comment>
<comment type="similarity">
    <text evidence="3">Belongs to the major facilitator superfamily. Sugar transporter (TC 2.A.1.1) family.</text>
</comment>
<sequence>MVHADGHNFPGSDPNPHMNKFAFGCAIVASIISIIFGYDTGVMSGAQIFIRDDLKINDTQIEVLAGILNLCALVGSLTAGKTSDVIGRRYTIALSAVIFLVGSVLMGYGPNYPVLMVGRCIAGVGVGFALMIAPVYSAEISSASHRGFLTSLPELCISLGILLGYVSNYCFGKLTLKLGWRLMLGIAAFPSLILAFGITRMPESPRWLVMQGRLEEAKKIMVLVSNTEEEAEERFRDILTAAEVDVTEIKEVGGGVKKKNHGKSVWRELVIKPRPAVRLILIAAVGIHFFEHATGIEAVVLYSPRIFKKAGVVSKDKLLLATVGVGLTKAFFIIIATFLLDKVGRRKLLLTSTGGMVFALTSLAVSLTMVQRFGRLAWALSLSIVSTYAFVAFFSIGLGPITWVYSSEIFPLRLRAQGASIGVAVNRIMNATVSMSFLSMTKAITTGGVFFVFAGIAVAAWWFFFFMLPETKGLPLEEMEKLFGGGGPRGDRDGLEIQTKTISIGGFS</sequence>
<organism>
    <name type="scientific">Arabidopsis thaliana</name>
    <name type="common">Mouse-ear cress</name>
    <dbReference type="NCBI Taxonomy" id="3702"/>
    <lineage>
        <taxon>Eukaryota</taxon>
        <taxon>Viridiplantae</taxon>
        <taxon>Streptophyta</taxon>
        <taxon>Embryophyta</taxon>
        <taxon>Tracheophyta</taxon>
        <taxon>Spermatophyta</taxon>
        <taxon>Magnoliopsida</taxon>
        <taxon>eudicotyledons</taxon>
        <taxon>Gunneridae</taxon>
        <taxon>Pentapetalae</taxon>
        <taxon>rosids</taxon>
        <taxon>malvids</taxon>
        <taxon>Brassicales</taxon>
        <taxon>Brassicaceae</taxon>
        <taxon>Camelineae</taxon>
        <taxon>Arabidopsis</taxon>
    </lineage>
</organism>
<dbReference type="EMBL" id="AC006135">
    <property type="protein sequence ID" value="AAD12218.1"/>
    <property type="molecule type" value="Genomic_DNA"/>
</dbReference>
<dbReference type="EMBL" id="AC006439">
    <property type="protein sequence ID" value="AAM15258.1"/>
    <property type="molecule type" value="Genomic_DNA"/>
</dbReference>
<dbReference type="EMBL" id="CP002685">
    <property type="protein sequence ID" value="AEC06773.1"/>
    <property type="molecule type" value="Genomic_DNA"/>
</dbReference>
<dbReference type="PIR" id="G84564">
    <property type="entry name" value="G84564"/>
</dbReference>
<dbReference type="RefSeq" id="NP_179438.1">
    <property type="nucleotide sequence ID" value="NM_127404.3"/>
</dbReference>
<dbReference type="SMR" id="Q9ZNS0"/>
<dbReference type="BioGRID" id="1720">
    <property type="interactions" value="8"/>
</dbReference>
<dbReference type="FunCoup" id="Q9ZNS0">
    <property type="interactions" value="3"/>
</dbReference>
<dbReference type="IntAct" id="Q9ZNS0">
    <property type="interactions" value="6"/>
</dbReference>
<dbReference type="STRING" id="3702.Q9ZNS0"/>
<dbReference type="PaxDb" id="3702-AT2G18480.1"/>
<dbReference type="ProteomicsDB" id="234736"/>
<dbReference type="EnsemblPlants" id="AT2G18480.1">
    <property type="protein sequence ID" value="AT2G18480.1"/>
    <property type="gene ID" value="AT2G18480"/>
</dbReference>
<dbReference type="GeneID" id="816363"/>
<dbReference type="Gramene" id="AT2G18480.1">
    <property type="protein sequence ID" value="AT2G18480.1"/>
    <property type="gene ID" value="AT2G18480"/>
</dbReference>
<dbReference type="KEGG" id="ath:AT2G18480"/>
<dbReference type="Araport" id="AT2G18480"/>
<dbReference type="TAIR" id="AT2G18480"/>
<dbReference type="eggNOG" id="KOG0254">
    <property type="taxonomic scope" value="Eukaryota"/>
</dbReference>
<dbReference type="HOGENOM" id="CLU_001265_30_5_1"/>
<dbReference type="InParanoid" id="Q9ZNS0"/>
<dbReference type="OMA" id="VTCVLVY"/>
<dbReference type="OrthoDB" id="6339427at2759"/>
<dbReference type="PhylomeDB" id="Q9ZNS0"/>
<dbReference type="PRO" id="PR:Q9ZNS0"/>
<dbReference type="Proteomes" id="UP000006548">
    <property type="component" value="Chromosome 2"/>
</dbReference>
<dbReference type="ExpressionAtlas" id="Q9ZNS0">
    <property type="expression patterns" value="baseline and differential"/>
</dbReference>
<dbReference type="GO" id="GO:0016020">
    <property type="term" value="C:membrane"/>
    <property type="evidence" value="ECO:0007669"/>
    <property type="project" value="UniProtKB-SubCell"/>
</dbReference>
<dbReference type="GO" id="GO:0005351">
    <property type="term" value="F:carbohydrate:proton symporter activity"/>
    <property type="evidence" value="ECO:0007669"/>
    <property type="project" value="InterPro"/>
</dbReference>
<dbReference type="GO" id="GO:0010311">
    <property type="term" value="P:lateral root formation"/>
    <property type="evidence" value="ECO:0000315"/>
    <property type="project" value="CACAO"/>
</dbReference>
<dbReference type="CDD" id="cd17437">
    <property type="entry name" value="MFS_PLT"/>
    <property type="match status" value="1"/>
</dbReference>
<dbReference type="FunFam" id="1.20.1250.20:FF:000025">
    <property type="entry name" value="probable polyol transporter 4"/>
    <property type="match status" value="1"/>
</dbReference>
<dbReference type="Gene3D" id="1.20.1250.20">
    <property type="entry name" value="MFS general substrate transporter like domains"/>
    <property type="match status" value="1"/>
</dbReference>
<dbReference type="InterPro" id="IPR020846">
    <property type="entry name" value="MFS_dom"/>
</dbReference>
<dbReference type="InterPro" id="IPR005828">
    <property type="entry name" value="MFS_sugar_transport-like"/>
</dbReference>
<dbReference type="InterPro" id="IPR036259">
    <property type="entry name" value="MFS_trans_sf"/>
</dbReference>
<dbReference type="InterPro" id="IPR044776">
    <property type="entry name" value="PLT1-6"/>
</dbReference>
<dbReference type="InterPro" id="IPR045262">
    <property type="entry name" value="STP/PLT_plant"/>
</dbReference>
<dbReference type="InterPro" id="IPR003663">
    <property type="entry name" value="Sugar/inositol_transpt"/>
</dbReference>
<dbReference type="InterPro" id="IPR005829">
    <property type="entry name" value="Sugar_transporter_CS"/>
</dbReference>
<dbReference type="NCBIfam" id="TIGR00879">
    <property type="entry name" value="SP"/>
    <property type="match status" value="1"/>
</dbReference>
<dbReference type="PANTHER" id="PTHR23500:SF453">
    <property type="entry name" value="POLYOL TRANSPORTER 3-RELATED"/>
    <property type="match status" value="1"/>
</dbReference>
<dbReference type="PANTHER" id="PTHR23500">
    <property type="entry name" value="SOLUTE CARRIER FAMILY 2, FACILITATED GLUCOSE TRANSPORTER"/>
    <property type="match status" value="1"/>
</dbReference>
<dbReference type="Pfam" id="PF00083">
    <property type="entry name" value="Sugar_tr"/>
    <property type="match status" value="1"/>
</dbReference>
<dbReference type="PRINTS" id="PR00171">
    <property type="entry name" value="SUGRTRNSPORT"/>
</dbReference>
<dbReference type="SUPFAM" id="SSF103473">
    <property type="entry name" value="MFS general substrate transporter"/>
    <property type="match status" value="1"/>
</dbReference>
<dbReference type="PROSITE" id="PS50850">
    <property type="entry name" value="MFS"/>
    <property type="match status" value="1"/>
</dbReference>
<dbReference type="PROSITE" id="PS00216">
    <property type="entry name" value="SUGAR_TRANSPORT_1"/>
    <property type="match status" value="1"/>
</dbReference>
<dbReference type="PROSITE" id="PS00217">
    <property type="entry name" value="SUGAR_TRANSPORT_2"/>
    <property type="match status" value="1"/>
</dbReference>
<name>PLT3_ARATH</name>